<feature type="peptide" id="PRO_0000043561" description="Ranatuerin-4" evidence="1">
    <location>
        <begin position="1"/>
        <end position="24"/>
    </location>
</feature>
<feature type="disulfide bond" evidence="4">
    <location>
        <begin position="18"/>
        <end position="24"/>
    </location>
</feature>
<dbReference type="GO" id="GO:0005576">
    <property type="term" value="C:extracellular region"/>
    <property type="evidence" value="ECO:0007669"/>
    <property type="project" value="UniProtKB-SubCell"/>
</dbReference>
<dbReference type="GO" id="GO:0042742">
    <property type="term" value="P:defense response to bacterium"/>
    <property type="evidence" value="ECO:0007669"/>
    <property type="project" value="UniProtKB-KW"/>
</dbReference>
<dbReference type="InterPro" id="IPR012520">
    <property type="entry name" value="Antimicrobial_frog_1"/>
</dbReference>
<dbReference type="Pfam" id="PF08018">
    <property type="entry name" value="Antimicrobial_1"/>
    <property type="match status" value="1"/>
</dbReference>
<reference key="1">
    <citation type="journal article" date="1998" name="Biochem. Biophys. Res. Commun.">
        <title>Ranatuerins: antimicrobial peptides isolated from the skin of the American bullfrog, Rana catesbeiana.</title>
        <authorList>
            <person name="Goraya J."/>
            <person name="Knoop F.C."/>
            <person name="Conlon J.M."/>
        </authorList>
    </citation>
    <scope>PROTEIN SEQUENCE</scope>
    <scope>FUNCTION</scope>
    <scope>SUBCELLULAR LOCATION</scope>
    <source>
        <tissue>Skin secretion</tissue>
    </source>
</reference>
<proteinExistence type="evidence at protein level"/>
<accession>P82819</accession>
<organism>
    <name type="scientific">Aquarana catesbeiana</name>
    <name type="common">American bullfrog</name>
    <name type="synonym">Rana catesbeiana</name>
    <dbReference type="NCBI Taxonomy" id="8400"/>
    <lineage>
        <taxon>Eukaryota</taxon>
        <taxon>Metazoa</taxon>
        <taxon>Chordata</taxon>
        <taxon>Craniata</taxon>
        <taxon>Vertebrata</taxon>
        <taxon>Euteleostomi</taxon>
        <taxon>Amphibia</taxon>
        <taxon>Batrachia</taxon>
        <taxon>Anura</taxon>
        <taxon>Neobatrachia</taxon>
        <taxon>Ranoidea</taxon>
        <taxon>Ranidae</taxon>
        <taxon>Aquarana</taxon>
    </lineage>
</organism>
<comment type="function">
    <text evidence="1">Antibacterial activity against Gram-positive bacterium S.aureus (MIC=55 uM). Shows no detectable hemolytic activity towards human erythrocytes.</text>
</comment>
<comment type="subcellular location">
    <subcellularLocation>
        <location evidence="1">Secreted</location>
    </subcellularLocation>
</comment>
<comment type="tissue specificity">
    <text evidence="4">Expressed by the skin glands.</text>
</comment>
<comment type="similarity">
    <text evidence="3">Belongs to the frog skin active peptide (FSAP) family. Ranatuerin subfamily.</text>
</comment>
<evidence type="ECO:0000269" key="1">
    <source>
    </source>
</evidence>
<evidence type="ECO:0000303" key="2">
    <source>
    </source>
</evidence>
<evidence type="ECO:0000305" key="3"/>
<evidence type="ECO:0000305" key="4">
    <source>
    </source>
</evidence>
<name>RN2X4_AQUCT</name>
<protein>
    <recommendedName>
        <fullName evidence="2">Ranatuerin-4</fullName>
    </recommendedName>
</protein>
<keyword id="KW-0878">Amphibian defense peptide</keyword>
<keyword id="KW-0044">Antibiotic</keyword>
<keyword id="KW-0929">Antimicrobial</keyword>
<keyword id="KW-0903">Direct protein sequencing</keyword>
<keyword id="KW-1015">Disulfide bond</keyword>
<keyword id="KW-0964">Secreted</keyword>
<sequence length="24" mass="2653">FLPFIARLAAKVFPSIICSVTKKC</sequence>